<feature type="chain" id="PRO_1000053754" description="Uracil phosphoribosyltransferase">
    <location>
        <begin position="1"/>
        <end position="209"/>
    </location>
</feature>
<feature type="binding site" evidence="1">
    <location>
        <position position="79"/>
    </location>
    <ligand>
        <name>5-phospho-alpha-D-ribose 1-diphosphate</name>
        <dbReference type="ChEBI" id="CHEBI:58017"/>
    </ligand>
</feature>
<feature type="binding site" evidence="1">
    <location>
        <position position="104"/>
    </location>
    <ligand>
        <name>5-phospho-alpha-D-ribose 1-diphosphate</name>
        <dbReference type="ChEBI" id="CHEBI:58017"/>
    </ligand>
</feature>
<feature type="binding site" evidence="1">
    <location>
        <begin position="131"/>
        <end position="139"/>
    </location>
    <ligand>
        <name>5-phospho-alpha-D-ribose 1-diphosphate</name>
        <dbReference type="ChEBI" id="CHEBI:58017"/>
    </ligand>
</feature>
<feature type="binding site" evidence="1">
    <location>
        <position position="194"/>
    </location>
    <ligand>
        <name>uracil</name>
        <dbReference type="ChEBI" id="CHEBI:17568"/>
    </ligand>
</feature>
<feature type="binding site" evidence="1">
    <location>
        <begin position="199"/>
        <end position="201"/>
    </location>
    <ligand>
        <name>uracil</name>
        <dbReference type="ChEBI" id="CHEBI:17568"/>
    </ligand>
</feature>
<feature type="binding site" evidence="1">
    <location>
        <position position="200"/>
    </location>
    <ligand>
        <name>5-phospho-alpha-D-ribose 1-diphosphate</name>
        <dbReference type="ChEBI" id="CHEBI:58017"/>
    </ligand>
</feature>
<proteinExistence type="inferred from homology"/>
<dbReference type="EC" id="2.4.2.9" evidence="1"/>
<dbReference type="EMBL" id="CP000422">
    <property type="protein sequence ID" value="ABJ68367.1"/>
    <property type="molecule type" value="Genomic_DNA"/>
</dbReference>
<dbReference type="RefSeq" id="WP_002833678.1">
    <property type="nucleotide sequence ID" value="NC_008525.1"/>
</dbReference>
<dbReference type="SMR" id="Q03EK5"/>
<dbReference type="STRING" id="278197.PEPE_1326"/>
<dbReference type="GeneID" id="33061437"/>
<dbReference type="KEGG" id="ppe:PEPE_1326"/>
<dbReference type="eggNOG" id="COG0035">
    <property type="taxonomic scope" value="Bacteria"/>
</dbReference>
<dbReference type="HOGENOM" id="CLU_067096_2_2_9"/>
<dbReference type="OrthoDB" id="9781675at2"/>
<dbReference type="UniPathway" id="UPA00574">
    <property type="reaction ID" value="UER00636"/>
</dbReference>
<dbReference type="Proteomes" id="UP000000773">
    <property type="component" value="Chromosome"/>
</dbReference>
<dbReference type="GO" id="GO:0005525">
    <property type="term" value="F:GTP binding"/>
    <property type="evidence" value="ECO:0007669"/>
    <property type="project" value="UniProtKB-KW"/>
</dbReference>
<dbReference type="GO" id="GO:0000287">
    <property type="term" value="F:magnesium ion binding"/>
    <property type="evidence" value="ECO:0007669"/>
    <property type="project" value="UniProtKB-UniRule"/>
</dbReference>
<dbReference type="GO" id="GO:0004845">
    <property type="term" value="F:uracil phosphoribosyltransferase activity"/>
    <property type="evidence" value="ECO:0007669"/>
    <property type="project" value="UniProtKB-UniRule"/>
</dbReference>
<dbReference type="GO" id="GO:0044206">
    <property type="term" value="P:UMP salvage"/>
    <property type="evidence" value="ECO:0007669"/>
    <property type="project" value="UniProtKB-UniRule"/>
</dbReference>
<dbReference type="GO" id="GO:0006223">
    <property type="term" value="P:uracil salvage"/>
    <property type="evidence" value="ECO:0007669"/>
    <property type="project" value="InterPro"/>
</dbReference>
<dbReference type="CDD" id="cd06223">
    <property type="entry name" value="PRTases_typeI"/>
    <property type="match status" value="1"/>
</dbReference>
<dbReference type="FunFam" id="3.40.50.2020:FF:000003">
    <property type="entry name" value="Uracil phosphoribosyltransferase"/>
    <property type="match status" value="1"/>
</dbReference>
<dbReference type="Gene3D" id="3.40.50.2020">
    <property type="match status" value="1"/>
</dbReference>
<dbReference type="HAMAP" id="MF_01218_B">
    <property type="entry name" value="Upp_B"/>
    <property type="match status" value="1"/>
</dbReference>
<dbReference type="InterPro" id="IPR000836">
    <property type="entry name" value="PRibTrfase_dom"/>
</dbReference>
<dbReference type="InterPro" id="IPR029057">
    <property type="entry name" value="PRTase-like"/>
</dbReference>
<dbReference type="InterPro" id="IPR034332">
    <property type="entry name" value="Upp_B"/>
</dbReference>
<dbReference type="InterPro" id="IPR050054">
    <property type="entry name" value="UPRTase/APRTase"/>
</dbReference>
<dbReference type="InterPro" id="IPR005765">
    <property type="entry name" value="Ura_phspho_trans"/>
</dbReference>
<dbReference type="NCBIfam" id="NF001097">
    <property type="entry name" value="PRK00129.1"/>
    <property type="match status" value="1"/>
</dbReference>
<dbReference type="NCBIfam" id="TIGR01091">
    <property type="entry name" value="upp"/>
    <property type="match status" value="1"/>
</dbReference>
<dbReference type="PANTHER" id="PTHR32315">
    <property type="entry name" value="ADENINE PHOSPHORIBOSYLTRANSFERASE"/>
    <property type="match status" value="1"/>
</dbReference>
<dbReference type="PANTHER" id="PTHR32315:SF4">
    <property type="entry name" value="URACIL PHOSPHORIBOSYLTRANSFERASE, CHLOROPLASTIC"/>
    <property type="match status" value="1"/>
</dbReference>
<dbReference type="Pfam" id="PF14681">
    <property type="entry name" value="UPRTase"/>
    <property type="match status" value="1"/>
</dbReference>
<dbReference type="SUPFAM" id="SSF53271">
    <property type="entry name" value="PRTase-like"/>
    <property type="match status" value="1"/>
</dbReference>
<name>UPP_PEDPA</name>
<comment type="function">
    <text evidence="1">Catalyzes the conversion of uracil and 5-phospho-alpha-D-ribose 1-diphosphate (PRPP) to UMP and diphosphate.</text>
</comment>
<comment type="catalytic activity">
    <reaction evidence="1">
        <text>UMP + diphosphate = 5-phospho-alpha-D-ribose 1-diphosphate + uracil</text>
        <dbReference type="Rhea" id="RHEA:13017"/>
        <dbReference type="ChEBI" id="CHEBI:17568"/>
        <dbReference type="ChEBI" id="CHEBI:33019"/>
        <dbReference type="ChEBI" id="CHEBI:57865"/>
        <dbReference type="ChEBI" id="CHEBI:58017"/>
        <dbReference type="EC" id="2.4.2.9"/>
    </reaction>
</comment>
<comment type="cofactor">
    <cofactor evidence="1">
        <name>Mg(2+)</name>
        <dbReference type="ChEBI" id="CHEBI:18420"/>
    </cofactor>
    <text evidence="1">Binds 1 Mg(2+) ion per subunit. The magnesium is bound as Mg-PRPP.</text>
</comment>
<comment type="activity regulation">
    <text evidence="1">Allosterically activated by GTP.</text>
</comment>
<comment type="pathway">
    <text evidence="1">Pyrimidine metabolism; UMP biosynthesis via salvage pathway; UMP from uracil: step 1/1.</text>
</comment>
<comment type="similarity">
    <text evidence="1">Belongs to the UPRTase family.</text>
</comment>
<accession>Q03EK5</accession>
<organism>
    <name type="scientific">Pediococcus pentosaceus (strain ATCC 25745 / CCUG 21536 / LMG 10740 / 183-1w)</name>
    <dbReference type="NCBI Taxonomy" id="278197"/>
    <lineage>
        <taxon>Bacteria</taxon>
        <taxon>Bacillati</taxon>
        <taxon>Bacillota</taxon>
        <taxon>Bacilli</taxon>
        <taxon>Lactobacillales</taxon>
        <taxon>Lactobacillaceae</taxon>
        <taxon>Pediococcus</taxon>
    </lineage>
</organism>
<gene>
    <name evidence="1" type="primary">upp</name>
    <name type="ordered locus">PEPE_1326</name>
</gene>
<evidence type="ECO:0000255" key="1">
    <source>
        <dbReference type="HAMAP-Rule" id="MF_01218"/>
    </source>
</evidence>
<reference key="1">
    <citation type="journal article" date="2006" name="Proc. Natl. Acad. Sci. U.S.A.">
        <title>Comparative genomics of the lactic acid bacteria.</title>
        <authorList>
            <person name="Makarova K.S."/>
            <person name="Slesarev A."/>
            <person name="Wolf Y.I."/>
            <person name="Sorokin A."/>
            <person name="Mirkin B."/>
            <person name="Koonin E.V."/>
            <person name="Pavlov A."/>
            <person name="Pavlova N."/>
            <person name="Karamychev V."/>
            <person name="Polouchine N."/>
            <person name="Shakhova V."/>
            <person name="Grigoriev I."/>
            <person name="Lou Y."/>
            <person name="Rohksar D."/>
            <person name="Lucas S."/>
            <person name="Huang K."/>
            <person name="Goodstein D.M."/>
            <person name="Hawkins T."/>
            <person name="Plengvidhya V."/>
            <person name="Welker D."/>
            <person name="Hughes J."/>
            <person name="Goh Y."/>
            <person name="Benson A."/>
            <person name="Baldwin K."/>
            <person name="Lee J.-H."/>
            <person name="Diaz-Muniz I."/>
            <person name="Dosti B."/>
            <person name="Smeianov V."/>
            <person name="Wechter W."/>
            <person name="Barabote R."/>
            <person name="Lorca G."/>
            <person name="Altermann E."/>
            <person name="Barrangou R."/>
            <person name="Ganesan B."/>
            <person name="Xie Y."/>
            <person name="Rawsthorne H."/>
            <person name="Tamir D."/>
            <person name="Parker C."/>
            <person name="Breidt F."/>
            <person name="Broadbent J.R."/>
            <person name="Hutkins R."/>
            <person name="O'Sullivan D."/>
            <person name="Steele J."/>
            <person name="Unlu G."/>
            <person name="Saier M.H. Jr."/>
            <person name="Klaenhammer T."/>
            <person name="Richardson P."/>
            <person name="Kozyavkin S."/>
            <person name="Weimer B.C."/>
            <person name="Mills D.A."/>
        </authorList>
    </citation>
    <scope>NUCLEOTIDE SEQUENCE [LARGE SCALE GENOMIC DNA]</scope>
    <source>
        <strain>ATCC 25745 / CCUG 21536 / LMG 10740 / 183-1w</strain>
    </source>
</reference>
<keyword id="KW-0021">Allosteric enzyme</keyword>
<keyword id="KW-0328">Glycosyltransferase</keyword>
<keyword id="KW-0342">GTP-binding</keyword>
<keyword id="KW-0460">Magnesium</keyword>
<keyword id="KW-0547">Nucleotide-binding</keyword>
<keyword id="KW-0808">Transferase</keyword>
<protein>
    <recommendedName>
        <fullName evidence="1">Uracil phosphoribosyltransferase</fullName>
        <ecNumber evidence="1">2.4.2.9</ecNumber>
    </recommendedName>
    <alternativeName>
        <fullName evidence="1">UMP pyrophosphorylase</fullName>
    </alternativeName>
    <alternativeName>
        <fullName evidence="1">UPRTase</fullName>
    </alternativeName>
</protein>
<sequence>MGKFEVLDHPLIQHKLTLIRDKHCSTKEFREIVNEISTLMAYEVSRDMPLMDVEIETPIGKSIQKQISGKKVAIVPILRAGLGMVDGMAELLPVARIGHIGMYRDEETLKPTEYFVKLPSDISERQVFVVDPMLATGGSAIMAVDALKKRGAKDIRFCSLVAAPEGVKALQEAHPDIDIYTAALDEKLNEDGYIVPGLGDAGDRLFGTK</sequence>